<gene>
    <name type="primary">PRP11</name>
    <name type="synonym">PRP10</name>
    <name type="synonym">RNA11</name>
    <name type="ordered locus">YDL043C</name>
    <name type="ORF">D2711</name>
</gene>
<name>PRP11_YEAST</name>
<evidence type="ECO:0000250" key="1"/>
<evidence type="ECO:0000256" key="2">
    <source>
        <dbReference type="SAM" id="MobiDB-lite"/>
    </source>
</evidence>
<evidence type="ECO:0000269" key="3">
    <source>
    </source>
</evidence>
<evidence type="ECO:0000269" key="4">
    <source>
    </source>
</evidence>
<evidence type="ECO:0000269" key="5">
    <source>
    </source>
</evidence>
<evidence type="ECO:0000305" key="6"/>
<evidence type="ECO:0007829" key="7">
    <source>
        <dbReference type="PDB" id="4DGW"/>
    </source>
</evidence>
<keyword id="KW-0002">3D-structure</keyword>
<keyword id="KW-0479">Metal-binding</keyword>
<keyword id="KW-0507">mRNA processing</keyword>
<keyword id="KW-0508">mRNA splicing</keyword>
<keyword id="KW-0539">Nucleus</keyword>
<keyword id="KW-1185">Reference proteome</keyword>
<keyword id="KW-0747">Spliceosome</keyword>
<keyword id="KW-0862">Zinc</keyword>
<keyword id="KW-0863">Zinc-finger</keyword>
<reference key="1">
    <citation type="journal article" date="1997" name="Yeast">
        <title>The sequence of a 36.7 kb segment on the left arm of chromosome IV from Saccharomyces cerevisiae reveals 20 non-overlapping open reading frames (ORFs) including SIT4, FAD1, NAM1, RNA11, SIR2, NAT1, PRP9, ACT2 and MPS1 and 11 new ORFs.</title>
        <authorList>
            <person name="Saren A.-M."/>
            <person name="Laamanen P."/>
            <person name="Lejarcegui J.B."/>
            <person name="Paulin L."/>
        </authorList>
    </citation>
    <scope>NUCLEOTIDE SEQUENCE [GENOMIC DNA]</scope>
    <source>
        <strain>ATCC 204508 / S288c</strain>
    </source>
</reference>
<reference key="2">
    <citation type="journal article" date="1997" name="Nature">
        <title>The nucleotide sequence of Saccharomyces cerevisiae chromosome IV.</title>
        <authorList>
            <person name="Jacq C."/>
            <person name="Alt-Moerbe J."/>
            <person name="Andre B."/>
            <person name="Arnold W."/>
            <person name="Bahr A."/>
            <person name="Ballesta J.P.G."/>
            <person name="Bargues M."/>
            <person name="Baron L."/>
            <person name="Becker A."/>
            <person name="Biteau N."/>
            <person name="Bloecker H."/>
            <person name="Blugeon C."/>
            <person name="Boskovic J."/>
            <person name="Brandt P."/>
            <person name="Brueckner M."/>
            <person name="Buitrago M.J."/>
            <person name="Coster F."/>
            <person name="Delaveau T."/>
            <person name="del Rey F."/>
            <person name="Dujon B."/>
            <person name="Eide L.G."/>
            <person name="Garcia-Cantalejo J.M."/>
            <person name="Goffeau A."/>
            <person name="Gomez-Peris A."/>
            <person name="Granotier C."/>
            <person name="Hanemann V."/>
            <person name="Hankeln T."/>
            <person name="Hoheisel J.D."/>
            <person name="Jaeger W."/>
            <person name="Jimenez A."/>
            <person name="Jonniaux J.-L."/>
            <person name="Kraemer C."/>
            <person name="Kuester H."/>
            <person name="Laamanen P."/>
            <person name="Legros Y."/>
            <person name="Louis E.J."/>
            <person name="Moeller-Rieker S."/>
            <person name="Monnet A."/>
            <person name="Moro M."/>
            <person name="Mueller-Auer S."/>
            <person name="Nussbaumer B."/>
            <person name="Paricio N."/>
            <person name="Paulin L."/>
            <person name="Perea J."/>
            <person name="Perez-Alonso M."/>
            <person name="Perez-Ortin J.E."/>
            <person name="Pohl T.M."/>
            <person name="Prydz H."/>
            <person name="Purnelle B."/>
            <person name="Rasmussen S.W."/>
            <person name="Remacha M.A."/>
            <person name="Revuelta J.L."/>
            <person name="Rieger M."/>
            <person name="Salom D."/>
            <person name="Saluz H.P."/>
            <person name="Saiz J.E."/>
            <person name="Saren A.-M."/>
            <person name="Schaefer M."/>
            <person name="Scharfe M."/>
            <person name="Schmidt E.R."/>
            <person name="Schneider C."/>
            <person name="Scholler P."/>
            <person name="Schwarz S."/>
            <person name="Soler-Mira A."/>
            <person name="Urrestarazu L.A."/>
            <person name="Verhasselt P."/>
            <person name="Vissers S."/>
            <person name="Voet M."/>
            <person name="Volckaert G."/>
            <person name="Wagner G."/>
            <person name="Wambutt R."/>
            <person name="Wedler E."/>
            <person name="Wedler H."/>
            <person name="Woelfl S."/>
            <person name="Harris D.E."/>
            <person name="Bowman S."/>
            <person name="Brown D."/>
            <person name="Churcher C.M."/>
            <person name="Connor R."/>
            <person name="Dedman K."/>
            <person name="Gentles S."/>
            <person name="Hamlin N."/>
            <person name="Hunt S."/>
            <person name="Jones L."/>
            <person name="McDonald S."/>
            <person name="Murphy L.D."/>
            <person name="Niblett D."/>
            <person name="Odell C."/>
            <person name="Oliver K."/>
            <person name="Rajandream M.A."/>
            <person name="Richards C."/>
            <person name="Shore L."/>
            <person name="Walsh S.V."/>
            <person name="Barrell B.G."/>
            <person name="Dietrich F.S."/>
            <person name="Mulligan J.T."/>
            <person name="Allen E."/>
            <person name="Araujo R."/>
            <person name="Aviles E."/>
            <person name="Berno A."/>
            <person name="Carpenter J."/>
            <person name="Chen E."/>
            <person name="Cherry J.M."/>
            <person name="Chung E."/>
            <person name="Duncan M."/>
            <person name="Hunicke-Smith S."/>
            <person name="Hyman R.W."/>
            <person name="Komp C."/>
            <person name="Lashkari D."/>
            <person name="Lew H."/>
            <person name="Lin D."/>
            <person name="Mosedale D."/>
            <person name="Nakahara K."/>
            <person name="Namath A."/>
            <person name="Oefner P."/>
            <person name="Oh C."/>
            <person name="Petel F.X."/>
            <person name="Roberts D."/>
            <person name="Schramm S."/>
            <person name="Schroeder M."/>
            <person name="Shogren T."/>
            <person name="Shroff N."/>
            <person name="Winant A."/>
            <person name="Yelton M.A."/>
            <person name="Botstein D."/>
            <person name="Davis R.W."/>
            <person name="Johnston M."/>
            <person name="Andrews S."/>
            <person name="Brinkman R."/>
            <person name="Cooper J."/>
            <person name="Ding H."/>
            <person name="Du Z."/>
            <person name="Favello A."/>
            <person name="Fulton L."/>
            <person name="Gattung S."/>
            <person name="Greco T."/>
            <person name="Hallsworth K."/>
            <person name="Hawkins J."/>
            <person name="Hillier L.W."/>
            <person name="Jier M."/>
            <person name="Johnson D."/>
            <person name="Johnston L."/>
            <person name="Kirsten J."/>
            <person name="Kucaba T."/>
            <person name="Langston Y."/>
            <person name="Latreille P."/>
            <person name="Le T."/>
            <person name="Mardis E."/>
            <person name="Menezes S."/>
            <person name="Miller N."/>
            <person name="Nhan M."/>
            <person name="Pauley A."/>
            <person name="Peluso D."/>
            <person name="Rifkin L."/>
            <person name="Riles L."/>
            <person name="Taich A."/>
            <person name="Trevaskis E."/>
            <person name="Vignati D."/>
            <person name="Wilcox L."/>
            <person name="Wohldman P."/>
            <person name="Vaudin M."/>
            <person name="Wilson R."/>
            <person name="Waterston R."/>
            <person name="Albermann K."/>
            <person name="Hani J."/>
            <person name="Heumann K."/>
            <person name="Kleine K."/>
            <person name="Mewes H.-W."/>
            <person name="Zollner A."/>
            <person name="Zaccaria P."/>
        </authorList>
    </citation>
    <scope>NUCLEOTIDE SEQUENCE [LARGE SCALE GENOMIC DNA]</scope>
    <source>
        <strain>ATCC 204508 / S288c</strain>
    </source>
</reference>
<reference key="3">
    <citation type="journal article" date="1998" name="Mol. Cell. Biol.">
        <title>CUS2, a yeast homolog of human Tat-SF1, rescues function of misfolded U2 through an unusual RNA recognition motif.</title>
        <authorList>
            <person name="Yan D."/>
            <person name="Perriman R."/>
            <person name="Igel H."/>
            <person name="Howe K.J."/>
            <person name="Neville M."/>
            <person name="Ares M. Jr."/>
        </authorList>
    </citation>
    <scope>FUNCTION</scope>
    <scope>INTERACTION WITH CUS2</scope>
</reference>
<reference key="4">
    <citation type="journal article" date="2014" name="G3 (Bethesda)">
        <title>The reference genome sequence of Saccharomyces cerevisiae: Then and now.</title>
        <authorList>
            <person name="Engel S.R."/>
            <person name="Dietrich F.S."/>
            <person name="Fisk D.G."/>
            <person name="Binkley G."/>
            <person name="Balakrishnan R."/>
            <person name="Costanzo M.C."/>
            <person name="Dwight S.S."/>
            <person name="Hitz B.C."/>
            <person name="Karra K."/>
            <person name="Nash R.S."/>
            <person name="Weng S."/>
            <person name="Wong E.D."/>
            <person name="Lloyd P."/>
            <person name="Skrzypek M.S."/>
            <person name="Miyasato S.R."/>
            <person name="Simison M."/>
            <person name="Cherry J.M."/>
        </authorList>
    </citation>
    <scope>GENOME REANNOTATION</scope>
    <source>
        <strain>ATCC 204508 / S288c</strain>
    </source>
</reference>
<reference key="5">
    <citation type="journal article" date="2002" name="Mol. Cell. Biol.">
        <title>Proteomics analysis reveals stable multiprotein complexes in both fission and budding yeasts containing Myb-related Cdc5p/Cef1p, novel pre-mRNA splicing factors, and snRNAs.</title>
        <authorList>
            <person name="Ohi M.D."/>
            <person name="Link A.J."/>
            <person name="Ren L."/>
            <person name="Jennings J.L."/>
            <person name="McDonald W.H."/>
            <person name="Gould K.L."/>
        </authorList>
    </citation>
    <scope>IDENTIFICATION IN THE CWC COMPLEX</scope>
    <scope>IDENTIFICATION BY MASS SPECTROMETRY</scope>
</reference>
<reference key="6">
    <citation type="journal article" date="2003" name="Nature">
        <title>Global analysis of protein expression in yeast.</title>
        <authorList>
            <person name="Ghaemmaghami S."/>
            <person name="Huh W.-K."/>
            <person name="Bower K."/>
            <person name="Howson R.W."/>
            <person name="Belle A."/>
            <person name="Dephoure N."/>
            <person name="O'Shea E.K."/>
            <person name="Weissman J.S."/>
        </authorList>
    </citation>
    <scope>LEVEL OF PROTEIN EXPRESSION [LARGE SCALE ANALYSIS]</scope>
</reference>
<organism>
    <name type="scientific">Saccharomyces cerevisiae (strain ATCC 204508 / S288c)</name>
    <name type="common">Baker's yeast</name>
    <dbReference type="NCBI Taxonomy" id="559292"/>
    <lineage>
        <taxon>Eukaryota</taxon>
        <taxon>Fungi</taxon>
        <taxon>Dikarya</taxon>
        <taxon>Ascomycota</taxon>
        <taxon>Saccharomycotina</taxon>
        <taxon>Saccharomycetes</taxon>
        <taxon>Saccharomycetales</taxon>
        <taxon>Saccharomycetaceae</taxon>
        <taxon>Saccharomyces</taxon>
    </lineage>
</organism>
<feature type="chain" id="PRO_0000174317" description="Pre-mRNA-splicing factor PRP11">
    <location>
        <begin position="1"/>
        <end position="266"/>
    </location>
</feature>
<feature type="zinc finger region" description="Matrin-type">
    <location>
        <begin position="66"/>
        <end position="96"/>
    </location>
</feature>
<feature type="region of interest" description="Disordered" evidence="2">
    <location>
        <begin position="1"/>
        <end position="21"/>
    </location>
</feature>
<feature type="strand" evidence="7">
    <location>
        <begin position="153"/>
        <end position="158"/>
    </location>
</feature>
<feature type="strand" evidence="7">
    <location>
        <begin position="162"/>
        <end position="164"/>
    </location>
</feature>
<feature type="strand" evidence="7">
    <location>
        <begin position="179"/>
        <end position="184"/>
    </location>
</feature>
<feature type="strand" evidence="7">
    <location>
        <begin position="197"/>
        <end position="202"/>
    </location>
</feature>
<feature type="strand" evidence="7">
    <location>
        <begin position="204"/>
        <end position="206"/>
    </location>
</feature>
<feature type="helix" evidence="7">
    <location>
        <begin position="235"/>
        <end position="239"/>
    </location>
</feature>
<feature type="strand" evidence="7">
    <location>
        <begin position="241"/>
        <end position="244"/>
    </location>
</feature>
<feature type="turn" evidence="7">
    <location>
        <begin position="245"/>
        <end position="248"/>
    </location>
</feature>
<feature type="strand" evidence="7">
    <location>
        <begin position="249"/>
        <end position="252"/>
    </location>
</feature>
<comment type="function">
    <text evidence="5">mRNA splicing factors, PRP9, PRP11, and PRP21, are necessary for addition of the U2 snRNP to the pre-mRNA in an early step of spliceosome assembly.</text>
</comment>
<comment type="subunit">
    <text evidence="3 5">Belongs to the CWC complex (or CEF1-associated complex), a spliceosome sub-complex reminiscent of a late-stage spliceosome composed of the U2, U5 and U6 snRNAs and at least BUD13, BUD31, BRR2, CDC40, CEF1, CLF1, CUS1, CWC2, CWC15, CWC21, CWC22, CWC23, CWC24, CWC25, CWC27, ECM2, HSH155, IST3, ISY1, LEA1, MSL1, NTC20, PRP8, PRP9, PRP11, PRP19, PRP21, PRP22, PRP45, PRP46, SLU7, SMB1, SMD1, SMD2, SMD3, SMX2, SMX3, SNT309, SNU114, SPP2, SYF1, SYF2, RSE1 and YJU2. Interacts with CUS2.</text>
</comment>
<comment type="interaction">
    <interactant intactId="EBI-688">
        <id>Q07350</id>
    </interactant>
    <interactant intactId="EBI-603">
        <id>P32524</id>
        <label>PRP21</label>
    </interactant>
    <organismsDiffer>false</organismsDiffer>
    <experiments>8</experiments>
</comment>
<comment type="subcellular location">
    <subcellularLocation>
        <location evidence="1">Nucleus</location>
    </subcellularLocation>
</comment>
<comment type="miscellaneous">
    <text evidence="4">Present with 3460 molecules/cell in log phase SD medium.</text>
</comment>
<comment type="similarity">
    <text evidence="6">Belongs to the SF3A2 family.</text>
</comment>
<dbReference type="EMBL" id="Z71781">
    <property type="protein sequence ID" value="CAA96446.1"/>
    <property type="status" value="ALT_SEQ"/>
    <property type="molecule type" value="Genomic_DNA"/>
</dbReference>
<dbReference type="EMBL" id="Z74091">
    <property type="protein sequence ID" value="CAA98602.1"/>
    <property type="molecule type" value="Genomic_DNA"/>
</dbReference>
<dbReference type="EMBL" id="BK006938">
    <property type="protein sequence ID" value="DAA11813.1"/>
    <property type="molecule type" value="Genomic_DNA"/>
</dbReference>
<dbReference type="PIR" id="S67576">
    <property type="entry name" value="S67576"/>
</dbReference>
<dbReference type="RefSeq" id="NP_010241.1">
    <property type="nucleotide sequence ID" value="NM_001180102.1"/>
</dbReference>
<dbReference type="PDB" id="4DGW">
    <property type="method" value="X-ray"/>
    <property type="resolution" value="3.11 A"/>
    <property type="chains" value="C=149-266"/>
</dbReference>
<dbReference type="PDB" id="5GM6">
    <property type="method" value="EM"/>
    <property type="resolution" value="3.50 A"/>
    <property type="chains" value="I=1-266"/>
</dbReference>
<dbReference type="PDB" id="5NRL">
    <property type="method" value="EM"/>
    <property type="resolution" value="7.20 A"/>
    <property type="chains" value="U=1-266"/>
</dbReference>
<dbReference type="PDB" id="5ZWM">
    <property type="method" value="EM"/>
    <property type="resolution" value="3.40 A"/>
    <property type="chains" value="v=1-266"/>
</dbReference>
<dbReference type="PDB" id="5ZWO">
    <property type="method" value="EM"/>
    <property type="resolution" value="3.90 A"/>
    <property type="chains" value="v=1-266"/>
</dbReference>
<dbReference type="PDB" id="6G90">
    <property type="method" value="EM"/>
    <property type="resolution" value="4.00 A"/>
    <property type="chains" value="U=1-266"/>
</dbReference>
<dbReference type="PDBsum" id="4DGW"/>
<dbReference type="PDBsum" id="5GM6"/>
<dbReference type="PDBsum" id="5NRL"/>
<dbReference type="PDBsum" id="5ZWM"/>
<dbReference type="PDBsum" id="5ZWO"/>
<dbReference type="PDBsum" id="6G90"/>
<dbReference type="EMDB" id="EMD-13028"/>
<dbReference type="EMDB" id="EMD-13033"/>
<dbReference type="EMDB" id="EMD-3683"/>
<dbReference type="EMDB" id="EMD-4364"/>
<dbReference type="EMDB" id="EMD-6972"/>
<dbReference type="EMDB" id="EMD-6974"/>
<dbReference type="EMDB" id="EMD-9524"/>
<dbReference type="SMR" id="Q07350"/>
<dbReference type="BioGRID" id="32016">
    <property type="interactions" value="328"/>
</dbReference>
<dbReference type="ComplexPortal" id="CPX-1648">
    <property type="entry name" value="SF3A complex"/>
</dbReference>
<dbReference type="ComplexPortal" id="CPX-1651">
    <property type="entry name" value="PRP19-associated complex"/>
</dbReference>
<dbReference type="ComplexPortal" id="CPX-26">
    <property type="entry name" value="U2 small nuclear ribonucleoprotein complex"/>
</dbReference>
<dbReference type="DIP" id="DIP-1001N"/>
<dbReference type="FunCoup" id="Q07350">
    <property type="interactions" value="523"/>
</dbReference>
<dbReference type="IntAct" id="Q07350">
    <property type="interactions" value="88"/>
</dbReference>
<dbReference type="MINT" id="Q07350"/>
<dbReference type="STRING" id="4932.YDL043C"/>
<dbReference type="iPTMnet" id="Q07350"/>
<dbReference type="PaxDb" id="4932-YDL043C"/>
<dbReference type="PeptideAtlas" id="Q07350"/>
<dbReference type="EnsemblFungi" id="YDL043C_mRNA">
    <property type="protein sequence ID" value="YDL043C"/>
    <property type="gene ID" value="YDL043C"/>
</dbReference>
<dbReference type="GeneID" id="851518"/>
<dbReference type="KEGG" id="sce:YDL043C"/>
<dbReference type="AGR" id="SGD:S000002201"/>
<dbReference type="SGD" id="S000002201">
    <property type="gene designation" value="PRP11"/>
</dbReference>
<dbReference type="VEuPathDB" id="FungiDB:YDL043C"/>
<dbReference type="eggNOG" id="KOG0227">
    <property type="taxonomic scope" value="Eukaryota"/>
</dbReference>
<dbReference type="GeneTree" id="ENSGT00720000108823"/>
<dbReference type="HOGENOM" id="CLU_087074_0_0_1"/>
<dbReference type="InParanoid" id="Q07350"/>
<dbReference type="OMA" id="PFIRIVS"/>
<dbReference type="OrthoDB" id="10250970at2759"/>
<dbReference type="BioCyc" id="YEAST:G3O-29463-MONOMER"/>
<dbReference type="BioGRID-ORCS" id="851518">
    <property type="hits" value="3 hits in 10 CRISPR screens"/>
</dbReference>
<dbReference type="EvolutionaryTrace" id="Q07350"/>
<dbReference type="PRO" id="PR:Q07350"/>
<dbReference type="Proteomes" id="UP000002311">
    <property type="component" value="Chromosome IV"/>
</dbReference>
<dbReference type="RNAct" id="Q07350">
    <property type="molecule type" value="protein"/>
</dbReference>
<dbReference type="GO" id="GO:0071013">
    <property type="term" value="C:catalytic step 2 spliceosome"/>
    <property type="evidence" value="ECO:0000318"/>
    <property type="project" value="GO_Central"/>
</dbReference>
<dbReference type="GO" id="GO:0005634">
    <property type="term" value="C:nucleus"/>
    <property type="evidence" value="ECO:0000303"/>
    <property type="project" value="ComplexPortal"/>
</dbReference>
<dbReference type="GO" id="GO:0000974">
    <property type="term" value="C:Prp19 complex"/>
    <property type="evidence" value="ECO:0000353"/>
    <property type="project" value="ComplexPortal"/>
</dbReference>
<dbReference type="GO" id="GO:0005681">
    <property type="term" value="C:spliceosomal complex"/>
    <property type="evidence" value="ECO:0000303"/>
    <property type="project" value="ComplexPortal"/>
</dbReference>
<dbReference type="GO" id="GO:0005686">
    <property type="term" value="C:U2 snRNP"/>
    <property type="evidence" value="ECO:0000318"/>
    <property type="project" value="GO_Central"/>
</dbReference>
<dbReference type="GO" id="GO:0071004">
    <property type="term" value="C:U2-type prespliceosome"/>
    <property type="evidence" value="ECO:0000314"/>
    <property type="project" value="SGD"/>
</dbReference>
<dbReference type="GO" id="GO:0003723">
    <property type="term" value="F:RNA binding"/>
    <property type="evidence" value="ECO:0000314"/>
    <property type="project" value="SGD"/>
</dbReference>
<dbReference type="GO" id="GO:0008270">
    <property type="term" value="F:zinc ion binding"/>
    <property type="evidence" value="ECO:0007669"/>
    <property type="project" value="UniProtKB-KW"/>
</dbReference>
<dbReference type="GO" id="GO:0000398">
    <property type="term" value="P:mRNA splicing, via spliceosome"/>
    <property type="evidence" value="ECO:0000303"/>
    <property type="project" value="ComplexPortal"/>
</dbReference>
<dbReference type="GO" id="GO:0000245">
    <property type="term" value="P:spliceosomal complex assembly"/>
    <property type="evidence" value="ECO:0000314"/>
    <property type="project" value="SGD"/>
</dbReference>
<dbReference type="GO" id="GO:1903241">
    <property type="term" value="P:U2-type prespliceosome assembly"/>
    <property type="evidence" value="ECO:0000303"/>
    <property type="project" value="ComplexPortal"/>
</dbReference>
<dbReference type="FunFam" id="2.60.40.2690:FF:000005">
    <property type="entry name" value="Pre-mRNA-splicing factor PRP11"/>
    <property type="match status" value="1"/>
</dbReference>
<dbReference type="Gene3D" id="2.60.40.2690">
    <property type="match status" value="1"/>
</dbReference>
<dbReference type="InterPro" id="IPR003604">
    <property type="entry name" value="Matrin/U1-like-C_Znf_C2H2"/>
</dbReference>
<dbReference type="InterPro" id="IPR052092">
    <property type="entry name" value="SF3A2"/>
</dbReference>
<dbReference type="InterPro" id="IPR031781">
    <property type="entry name" value="SF3A2_dom"/>
</dbReference>
<dbReference type="InterPro" id="IPR036236">
    <property type="entry name" value="Znf_C2H2_sf"/>
</dbReference>
<dbReference type="InterPro" id="IPR013087">
    <property type="entry name" value="Znf_C2H2_type"/>
</dbReference>
<dbReference type="PANTHER" id="PTHR23205">
    <property type="entry name" value="SPLICING FACTOR 3A SUBUNIT 2"/>
    <property type="match status" value="1"/>
</dbReference>
<dbReference type="PANTHER" id="PTHR23205:SF0">
    <property type="entry name" value="SPLICING FACTOR 3A SUBUNIT 2"/>
    <property type="match status" value="1"/>
</dbReference>
<dbReference type="Pfam" id="PF16835">
    <property type="entry name" value="SF3A2"/>
    <property type="match status" value="1"/>
</dbReference>
<dbReference type="Pfam" id="PF12874">
    <property type="entry name" value="zf-met"/>
    <property type="match status" value="1"/>
</dbReference>
<dbReference type="SMART" id="SM00451">
    <property type="entry name" value="ZnF_U1"/>
    <property type="match status" value="1"/>
</dbReference>
<dbReference type="SUPFAM" id="SSF57667">
    <property type="entry name" value="beta-beta-alpha zinc fingers"/>
    <property type="match status" value="1"/>
</dbReference>
<sequence length="266" mass="29921">MNYLEGVGSKKGGGGIASESQFNLQRRKEVESLLSKGENVPYTFQDEKDDQVRSNPYIYKNHSGKLVCKLCNTMHMSWSSVERHLGGKKHGLNVLRRGISIEKSSLGREGQTTHDFRQQQKIIEAKQSLKNNGTIPVCKIATVKNPKNGSVGLAIQVNYSSEVKENSVDSDDKAKVPPLIRIVSGLELSDTKQKGKKFLVIAYEPFENIAIELPPNEILFSENNDMDNNNDGVDELNKKCTFWDAISKLYYVQFFFKQAEQEQADV</sequence>
<accession>Q07350</accession>
<accession>D6VRV3</accession>
<accession>Q05434</accession>
<proteinExistence type="evidence at protein level"/>
<protein>
    <recommendedName>
        <fullName>Pre-mRNA-splicing factor PRP11</fullName>
    </recommendedName>
</protein>